<reference key="1">
    <citation type="journal article" date="2009" name="Science">
        <title>The dynamics and time scale of ongoing genomic erosion in symbiotic bacteria.</title>
        <authorList>
            <person name="Moran N.A."/>
            <person name="McLaughlin H.J."/>
            <person name="Sorek R."/>
        </authorList>
    </citation>
    <scope>NUCLEOTIDE SEQUENCE [LARGE SCALE GENOMIC DNA]</scope>
    <source>
        <strain>Tuc7</strain>
    </source>
</reference>
<protein>
    <recommendedName>
        <fullName evidence="1">Large ribosomal subunit protein uL11</fullName>
    </recommendedName>
    <alternativeName>
        <fullName evidence="2">50S ribosomal protein L11</fullName>
    </alternativeName>
</protein>
<gene>
    <name evidence="1" type="primary">rplK</name>
    <name type="ordered locus">BUAPTUC7_038</name>
</gene>
<evidence type="ECO:0000255" key="1">
    <source>
        <dbReference type="HAMAP-Rule" id="MF_00736"/>
    </source>
</evidence>
<evidence type="ECO:0000305" key="2"/>
<accession>B8D6V4</accession>
<dbReference type="EMBL" id="CP001158">
    <property type="protein sequence ID" value="ACL29869.1"/>
    <property type="molecule type" value="Genomic_DNA"/>
</dbReference>
<dbReference type="RefSeq" id="WP_009873999.1">
    <property type="nucleotide sequence ID" value="NC_011834.1"/>
</dbReference>
<dbReference type="SMR" id="B8D6V4"/>
<dbReference type="KEGG" id="bau:BUAPTUC7_038"/>
<dbReference type="HOGENOM" id="CLU_074237_2_0_6"/>
<dbReference type="GO" id="GO:0022625">
    <property type="term" value="C:cytosolic large ribosomal subunit"/>
    <property type="evidence" value="ECO:0007669"/>
    <property type="project" value="TreeGrafter"/>
</dbReference>
<dbReference type="GO" id="GO:0070180">
    <property type="term" value="F:large ribosomal subunit rRNA binding"/>
    <property type="evidence" value="ECO:0007669"/>
    <property type="project" value="UniProtKB-UniRule"/>
</dbReference>
<dbReference type="GO" id="GO:0003735">
    <property type="term" value="F:structural constituent of ribosome"/>
    <property type="evidence" value="ECO:0007669"/>
    <property type="project" value="InterPro"/>
</dbReference>
<dbReference type="GO" id="GO:0006412">
    <property type="term" value="P:translation"/>
    <property type="evidence" value="ECO:0007669"/>
    <property type="project" value="UniProtKB-UniRule"/>
</dbReference>
<dbReference type="CDD" id="cd00349">
    <property type="entry name" value="Ribosomal_L11"/>
    <property type="match status" value="1"/>
</dbReference>
<dbReference type="FunFam" id="1.10.10.250:FF:000001">
    <property type="entry name" value="50S ribosomal protein L11"/>
    <property type="match status" value="1"/>
</dbReference>
<dbReference type="FunFam" id="3.30.1550.10:FF:000001">
    <property type="entry name" value="50S ribosomal protein L11"/>
    <property type="match status" value="1"/>
</dbReference>
<dbReference type="Gene3D" id="1.10.10.250">
    <property type="entry name" value="Ribosomal protein L11, C-terminal domain"/>
    <property type="match status" value="1"/>
</dbReference>
<dbReference type="Gene3D" id="3.30.1550.10">
    <property type="entry name" value="Ribosomal protein L11/L12, N-terminal domain"/>
    <property type="match status" value="1"/>
</dbReference>
<dbReference type="HAMAP" id="MF_00736">
    <property type="entry name" value="Ribosomal_uL11"/>
    <property type="match status" value="1"/>
</dbReference>
<dbReference type="InterPro" id="IPR000911">
    <property type="entry name" value="Ribosomal_uL11"/>
</dbReference>
<dbReference type="InterPro" id="IPR006519">
    <property type="entry name" value="Ribosomal_uL11_bac-typ"/>
</dbReference>
<dbReference type="InterPro" id="IPR020783">
    <property type="entry name" value="Ribosomal_uL11_C"/>
</dbReference>
<dbReference type="InterPro" id="IPR036769">
    <property type="entry name" value="Ribosomal_uL11_C_sf"/>
</dbReference>
<dbReference type="InterPro" id="IPR020785">
    <property type="entry name" value="Ribosomal_uL11_CS"/>
</dbReference>
<dbReference type="InterPro" id="IPR020784">
    <property type="entry name" value="Ribosomal_uL11_N"/>
</dbReference>
<dbReference type="InterPro" id="IPR036796">
    <property type="entry name" value="Ribosomal_uL11_N_sf"/>
</dbReference>
<dbReference type="NCBIfam" id="TIGR01632">
    <property type="entry name" value="L11_bact"/>
    <property type="match status" value="1"/>
</dbReference>
<dbReference type="PANTHER" id="PTHR11661">
    <property type="entry name" value="60S RIBOSOMAL PROTEIN L12"/>
    <property type="match status" value="1"/>
</dbReference>
<dbReference type="PANTHER" id="PTHR11661:SF1">
    <property type="entry name" value="LARGE RIBOSOMAL SUBUNIT PROTEIN UL11M"/>
    <property type="match status" value="1"/>
</dbReference>
<dbReference type="Pfam" id="PF00298">
    <property type="entry name" value="Ribosomal_L11"/>
    <property type="match status" value="1"/>
</dbReference>
<dbReference type="Pfam" id="PF03946">
    <property type="entry name" value="Ribosomal_L11_N"/>
    <property type="match status" value="1"/>
</dbReference>
<dbReference type="SMART" id="SM00649">
    <property type="entry name" value="RL11"/>
    <property type="match status" value="1"/>
</dbReference>
<dbReference type="SUPFAM" id="SSF54747">
    <property type="entry name" value="Ribosomal L11/L12e N-terminal domain"/>
    <property type="match status" value="1"/>
</dbReference>
<dbReference type="SUPFAM" id="SSF46906">
    <property type="entry name" value="Ribosomal protein L11, C-terminal domain"/>
    <property type="match status" value="1"/>
</dbReference>
<dbReference type="PROSITE" id="PS00359">
    <property type="entry name" value="RIBOSOMAL_L11"/>
    <property type="match status" value="1"/>
</dbReference>
<proteinExistence type="inferred from homology"/>
<comment type="function">
    <text evidence="1">Forms part of the ribosomal stalk which helps the ribosome interact with GTP-bound translation factors.</text>
</comment>
<comment type="subunit">
    <text evidence="1">Part of the ribosomal stalk of the 50S ribosomal subunit. Interacts with L10 and the large rRNA to form the base of the stalk. L10 forms an elongated spine to which L12 dimers bind in a sequential fashion forming a multimeric L10(L12)X complex.</text>
</comment>
<comment type="PTM">
    <text evidence="1">One or more lysine residues are methylated.</text>
</comment>
<comment type="similarity">
    <text evidence="1">Belongs to the universal ribosomal protein uL11 family.</text>
</comment>
<name>RL11_BUCAT</name>
<sequence>MAKKIQSYIKLQVSAGAANPSPPIGPALGQKGVNIMEFCKLFNKKTENIEKGLPIPVIITVYSDRSFTFITKTPPASVLLKKLSGIKKGSSKNKSEKIGKINRSQIKEIAIIKNNDMTGSNIENMMRSIEGTAKSMGLIIEG</sequence>
<feature type="chain" id="PRO_1000195589" description="Large ribosomal subunit protein uL11">
    <location>
        <begin position="1"/>
        <end position="142"/>
    </location>
</feature>
<organism>
    <name type="scientific">Buchnera aphidicola subsp. Acyrthosiphon pisum (strain Tuc7)</name>
    <dbReference type="NCBI Taxonomy" id="561501"/>
    <lineage>
        <taxon>Bacteria</taxon>
        <taxon>Pseudomonadati</taxon>
        <taxon>Pseudomonadota</taxon>
        <taxon>Gammaproteobacteria</taxon>
        <taxon>Enterobacterales</taxon>
        <taxon>Erwiniaceae</taxon>
        <taxon>Buchnera</taxon>
    </lineage>
</organism>
<keyword id="KW-0488">Methylation</keyword>
<keyword id="KW-0687">Ribonucleoprotein</keyword>
<keyword id="KW-0689">Ribosomal protein</keyword>
<keyword id="KW-0694">RNA-binding</keyword>
<keyword id="KW-0699">rRNA-binding</keyword>